<proteinExistence type="inferred from homology"/>
<gene>
    <name evidence="1" type="primary">yihI</name>
    <name type="ordered locus">ECIAI1_4065</name>
</gene>
<evidence type="ECO:0000255" key="1">
    <source>
        <dbReference type="HAMAP-Rule" id="MF_01058"/>
    </source>
</evidence>
<evidence type="ECO:0000256" key="2">
    <source>
        <dbReference type="SAM" id="MobiDB-lite"/>
    </source>
</evidence>
<dbReference type="EMBL" id="CU928160">
    <property type="protein sequence ID" value="CAR00836.1"/>
    <property type="molecule type" value="Genomic_DNA"/>
</dbReference>
<dbReference type="RefSeq" id="WP_001295266.1">
    <property type="nucleotide sequence ID" value="NC_011741.1"/>
</dbReference>
<dbReference type="SMR" id="B7M664"/>
<dbReference type="GeneID" id="75204333"/>
<dbReference type="KEGG" id="ecr:ECIAI1_4065"/>
<dbReference type="HOGENOM" id="CLU_094104_2_0_6"/>
<dbReference type="GO" id="GO:0005096">
    <property type="term" value="F:GTPase activator activity"/>
    <property type="evidence" value="ECO:0007669"/>
    <property type="project" value="UniProtKB-KW"/>
</dbReference>
<dbReference type="GO" id="GO:0042254">
    <property type="term" value="P:ribosome biogenesis"/>
    <property type="evidence" value="ECO:0007669"/>
    <property type="project" value="UniProtKB-KW"/>
</dbReference>
<dbReference type="HAMAP" id="MF_01058">
    <property type="entry name" value="GAP_YihI"/>
    <property type="match status" value="1"/>
</dbReference>
<dbReference type="InterPro" id="IPR007336">
    <property type="entry name" value="YihI"/>
</dbReference>
<dbReference type="NCBIfam" id="NF003560">
    <property type="entry name" value="PRK05244.1-1"/>
    <property type="match status" value="1"/>
</dbReference>
<dbReference type="Pfam" id="PF04220">
    <property type="entry name" value="YihI"/>
    <property type="match status" value="1"/>
</dbReference>
<reference key="1">
    <citation type="journal article" date="2009" name="PLoS Genet.">
        <title>Organised genome dynamics in the Escherichia coli species results in highly diverse adaptive paths.</title>
        <authorList>
            <person name="Touchon M."/>
            <person name="Hoede C."/>
            <person name="Tenaillon O."/>
            <person name="Barbe V."/>
            <person name="Baeriswyl S."/>
            <person name="Bidet P."/>
            <person name="Bingen E."/>
            <person name="Bonacorsi S."/>
            <person name="Bouchier C."/>
            <person name="Bouvet O."/>
            <person name="Calteau A."/>
            <person name="Chiapello H."/>
            <person name="Clermont O."/>
            <person name="Cruveiller S."/>
            <person name="Danchin A."/>
            <person name="Diard M."/>
            <person name="Dossat C."/>
            <person name="Karoui M.E."/>
            <person name="Frapy E."/>
            <person name="Garry L."/>
            <person name="Ghigo J.M."/>
            <person name="Gilles A.M."/>
            <person name="Johnson J."/>
            <person name="Le Bouguenec C."/>
            <person name="Lescat M."/>
            <person name="Mangenot S."/>
            <person name="Martinez-Jehanne V."/>
            <person name="Matic I."/>
            <person name="Nassif X."/>
            <person name="Oztas S."/>
            <person name="Petit M.A."/>
            <person name="Pichon C."/>
            <person name="Rouy Z."/>
            <person name="Ruf C.S."/>
            <person name="Schneider D."/>
            <person name="Tourret J."/>
            <person name="Vacherie B."/>
            <person name="Vallenet D."/>
            <person name="Medigue C."/>
            <person name="Rocha E.P.C."/>
            <person name="Denamur E."/>
        </authorList>
    </citation>
    <scope>NUCLEOTIDE SEQUENCE [LARGE SCALE GENOMIC DNA]</scope>
    <source>
        <strain>IAI1</strain>
    </source>
</reference>
<keyword id="KW-0343">GTPase activation</keyword>
<keyword id="KW-0690">Ribosome biogenesis</keyword>
<accession>B7M664</accession>
<organism>
    <name type="scientific">Escherichia coli O8 (strain IAI1)</name>
    <dbReference type="NCBI Taxonomy" id="585034"/>
    <lineage>
        <taxon>Bacteria</taxon>
        <taxon>Pseudomonadati</taxon>
        <taxon>Pseudomonadota</taxon>
        <taxon>Gammaproteobacteria</taxon>
        <taxon>Enterobacterales</taxon>
        <taxon>Enterobacteriaceae</taxon>
        <taxon>Escherichia</taxon>
    </lineage>
</organism>
<name>YIHI_ECO8A</name>
<comment type="function">
    <text evidence="1">A GTPase-activating protein (GAP) that modifies Der/EngA GTPase function. May play a role in ribosome biogenesis.</text>
</comment>
<comment type="subunit">
    <text evidence="1">Interacts with Der.</text>
</comment>
<comment type="similarity">
    <text evidence="1">Belongs to the YihI family.</text>
</comment>
<sequence>MKPSSSNSRSKGHAKARRKTREELDQEARDRKRQKKRRGHAPGSRAAGGNTTSGSKGQNAPKDPRIGSKTPIPLGVTEKVTKQHKPKSEKPMLSPQAELELLETDERLDALLERLEAGETLSAEEQSWVDAKLDRIDELMQKLGLSYDDDEEEEEDEKQEDMMRLLRGN</sequence>
<feature type="chain" id="PRO_1000136381" description="Der GTPase-activating protein YihI">
    <location>
        <begin position="1"/>
        <end position="169"/>
    </location>
</feature>
<feature type="region of interest" description="Disordered" evidence="2">
    <location>
        <begin position="1"/>
        <end position="98"/>
    </location>
</feature>
<feature type="region of interest" description="Disordered" evidence="2">
    <location>
        <begin position="144"/>
        <end position="169"/>
    </location>
</feature>
<feature type="compositionally biased region" description="Basic residues" evidence="2">
    <location>
        <begin position="10"/>
        <end position="19"/>
    </location>
</feature>
<feature type="compositionally biased region" description="Basic and acidic residues" evidence="2">
    <location>
        <begin position="20"/>
        <end position="30"/>
    </location>
</feature>
<feature type="compositionally biased region" description="Basic residues" evidence="2">
    <location>
        <begin position="31"/>
        <end position="40"/>
    </location>
</feature>
<feature type="compositionally biased region" description="Polar residues" evidence="2">
    <location>
        <begin position="49"/>
        <end position="58"/>
    </location>
</feature>
<feature type="compositionally biased region" description="Acidic residues" evidence="2">
    <location>
        <begin position="147"/>
        <end position="159"/>
    </location>
</feature>
<feature type="compositionally biased region" description="Basic and acidic residues" evidence="2">
    <location>
        <begin position="160"/>
        <end position="169"/>
    </location>
</feature>
<protein>
    <recommendedName>
        <fullName evidence="1">Der GTPase-activating protein YihI</fullName>
    </recommendedName>
</protein>